<keyword id="KW-0963">Cytoplasm</keyword>
<keyword id="KW-0489">Methyltransferase</keyword>
<keyword id="KW-0698">rRNA processing</keyword>
<keyword id="KW-0949">S-adenosyl-L-methionine</keyword>
<keyword id="KW-0808">Transferase</keyword>
<comment type="function">
    <text evidence="1">Specifically methylates the guanosine in position 1516 of 16S rRNA.</text>
</comment>
<comment type="catalytic activity">
    <reaction evidence="1">
        <text>guanosine(1516) in 16S rRNA + S-adenosyl-L-methionine = N(2)-methylguanosine(1516) in 16S rRNA + S-adenosyl-L-homocysteine + H(+)</text>
        <dbReference type="Rhea" id="RHEA:43220"/>
        <dbReference type="Rhea" id="RHEA-COMP:10412"/>
        <dbReference type="Rhea" id="RHEA-COMP:10413"/>
        <dbReference type="ChEBI" id="CHEBI:15378"/>
        <dbReference type="ChEBI" id="CHEBI:57856"/>
        <dbReference type="ChEBI" id="CHEBI:59789"/>
        <dbReference type="ChEBI" id="CHEBI:74269"/>
        <dbReference type="ChEBI" id="CHEBI:74481"/>
        <dbReference type="EC" id="2.1.1.242"/>
    </reaction>
</comment>
<comment type="subcellular location">
    <subcellularLocation>
        <location evidence="1">Cytoplasm</location>
    </subcellularLocation>
</comment>
<comment type="similarity">
    <text evidence="1">Belongs to the methyltransferase superfamily. RsmJ family.</text>
</comment>
<proteinExistence type="inferred from homology"/>
<accession>B7LSX8</accession>
<sequence length="250" mass="26965">MKICLIDETGAGDGALSVLASRWGLEHDEDNLMALVLTPEHLELRKRDEPKLGGIFVDFVGGTMAHRRKFGGGRGEAVAKAVGIKGDYLPDVVDATAGLGRDAFVLASVGCRVRMLERNPVVAALLDDGLARGYADAEIGGWLQERLQLIHASSLTALTDITPRPQVVYLDPMFPHKQKSALVKKEMRVFQSLVGPDLDADGLLEPARLLATKRVVVKRPDYAPPLANVATPNAVVTKGHRFDIYAGTPV</sequence>
<feature type="chain" id="PRO_1000198499" description="Ribosomal RNA small subunit methyltransferase J">
    <location>
        <begin position="1"/>
        <end position="250"/>
    </location>
</feature>
<feature type="binding site" evidence="1">
    <location>
        <begin position="101"/>
        <end position="102"/>
    </location>
    <ligand>
        <name>S-adenosyl-L-methionine</name>
        <dbReference type="ChEBI" id="CHEBI:59789"/>
    </ligand>
</feature>
<feature type="binding site" evidence="1">
    <location>
        <begin position="117"/>
        <end position="118"/>
    </location>
    <ligand>
        <name>S-adenosyl-L-methionine</name>
        <dbReference type="ChEBI" id="CHEBI:59789"/>
    </ligand>
</feature>
<feature type="binding site" evidence="1">
    <location>
        <begin position="153"/>
        <end position="154"/>
    </location>
    <ligand>
        <name>S-adenosyl-L-methionine</name>
        <dbReference type="ChEBI" id="CHEBI:59789"/>
    </ligand>
</feature>
<feature type="binding site" evidence="1">
    <location>
        <position position="171"/>
    </location>
    <ligand>
        <name>S-adenosyl-L-methionine</name>
        <dbReference type="ChEBI" id="CHEBI:59789"/>
    </ligand>
</feature>
<reference key="1">
    <citation type="journal article" date="2009" name="PLoS Genet.">
        <title>Organised genome dynamics in the Escherichia coli species results in highly diverse adaptive paths.</title>
        <authorList>
            <person name="Touchon M."/>
            <person name="Hoede C."/>
            <person name="Tenaillon O."/>
            <person name="Barbe V."/>
            <person name="Baeriswyl S."/>
            <person name="Bidet P."/>
            <person name="Bingen E."/>
            <person name="Bonacorsi S."/>
            <person name="Bouchier C."/>
            <person name="Bouvet O."/>
            <person name="Calteau A."/>
            <person name="Chiapello H."/>
            <person name="Clermont O."/>
            <person name="Cruveiller S."/>
            <person name="Danchin A."/>
            <person name="Diard M."/>
            <person name="Dossat C."/>
            <person name="Karoui M.E."/>
            <person name="Frapy E."/>
            <person name="Garry L."/>
            <person name="Ghigo J.M."/>
            <person name="Gilles A.M."/>
            <person name="Johnson J."/>
            <person name="Le Bouguenec C."/>
            <person name="Lescat M."/>
            <person name="Mangenot S."/>
            <person name="Martinez-Jehanne V."/>
            <person name="Matic I."/>
            <person name="Nassif X."/>
            <person name="Oztas S."/>
            <person name="Petit M.A."/>
            <person name="Pichon C."/>
            <person name="Rouy Z."/>
            <person name="Ruf C.S."/>
            <person name="Schneider D."/>
            <person name="Tourret J."/>
            <person name="Vacherie B."/>
            <person name="Vallenet D."/>
            <person name="Medigue C."/>
            <person name="Rocha E.P.C."/>
            <person name="Denamur E."/>
        </authorList>
    </citation>
    <scope>NUCLEOTIDE SEQUENCE [LARGE SCALE GENOMIC DNA]</scope>
    <source>
        <strain>ATCC 35469 / DSM 13698 / BCRC 15582 / CCUG 18766 / IAM 14443 / JCM 21226 / LMG 7866 / NBRC 102419 / NCTC 12128 / CDC 0568-73</strain>
    </source>
</reference>
<organism>
    <name type="scientific">Escherichia fergusonii (strain ATCC 35469 / DSM 13698 / CCUG 18766 / IAM 14443 / JCM 21226 / LMG 7866 / NBRC 102419 / NCTC 12128 / CDC 0568-73)</name>
    <dbReference type="NCBI Taxonomy" id="585054"/>
    <lineage>
        <taxon>Bacteria</taxon>
        <taxon>Pseudomonadati</taxon>
        <taxon>Pseudomonadota</taxon>
        <taxon>Gammaproteobacteria</taxon>
        <taxon>Enterobacterales</taxon>
        <taxon>Enterobacteriaceae</taxon>
        <taxon>Escherichia</taxon>
    </lineage>
</organism>
<evidence type="ECO:0000255" key="1">
    <source>
        <dbReference type="HAMAP-Rule" id="MF_01523"/>
    </source>
</evidence>
<protein>
    <recommendedName>
        <fullName evidence="1">Ribosomal RNA small subunit methyltransferase J</fullName>
        <ecNumber evidence="1">2.1.1.242</ecNumber>
    </recommendedName>
    <alternativeName>
        <fullName evidence="1">16S rRNA m2G1516 methyltransferase</fullName>
    </alternativeName>
    <alternativeName>
        <fullName evidence="1">rRNA (guanine-N(2)-)-methyltransferase</fullName>
    </alternativeName>
</protein>
<gene>
    <name evidence="1" type="primary">rsmJ</name>
    <name type="synonym">yhiQ</name>
    <name type="ordered locus">EFER_3490</name>
</gene>
<name>RSMJ_ESCF3</name>
<dbReference type="EC" id="2.1.1.242" evidence="1"/>
<dbReference type="EMBL" id="CU928158">
    <property type="protein sequence ID" value="CAQ90967.1"/>
    <property type="molecule type" value="Genomic_DNA"/>
</dbReference>
<dbReference type="RefSeq" id="WP_000686614.1">
    <property type="nucleotide sequence ID" value="NC_011740.1"/>
</dbReference>
<dbReference type="SMR" id="B7LSX8"/>
<dbReference type="GeneID" id="75059901"/>
<dbReference type="KEGG" id="efe:EFER_3490"/>
<dbReference type="HOGENOM" id="CLU_076324_0_0_6"/>
<dbReference type="OrthoDB" id="3191794at2"/>
<dbReference type="Proteomes" id="UP000000745">
    <property type="component" value="Chromosome"/>
</dbReference>
<dbReference type="GO" id="GO:0005737">
    <property type="term" value="C:cytoplasm"/>
    <property type="evidence" value="ECO:0007669"/>
    <property type="project" value="UniProtKB-SubCell"/>
</dbReference>
<dbReference type="GO" id="GO:0008990">
    <property type="term" value="F:rRNA (guanine-N2-)-methyltransferase activity"/>
    <property type="evidence" value="ECO:0007669"/>
    <property type="project" value="UniProtKB-UniRule"/>
</dbReference>
<dbReference type="CDD" id="cd02440">
    <property type="entry name" value="AdoMet_MTases"/>
    <property type="match status" value="1"/>
</dbReference>
<dbReference type="FunFam" id="3.40.50.150:FF:000072">
    <property type="entry name" value="Ribosomal RNA small subunit methyltransferase J"/>
    <property type="match status" value="1"/>
</dbReference>
<dbReference type="Gene3D" id="3.40.50.150">
    <property type="entry name" value="Vaccinia Virus protein VP39"/>
    <property type="match status" value="1"/>
</dbReference>
<dbReference type="Gene3D" id="3.40.1630.10">
    <property type="entry name" value="YhiQ-like domain"/>
    <property type="match status" value="1"/>
</dbReference>
<dbReference type="HAMAP" id="MF_01523">
    <property type="entry name" value="16SrRNA_methyltr_J"/>
    <property type="match status" value="1"/>
</dbReference>
<dbReference type="InterPro" id="IPR007536">
    <property type="entry name" value="16SrRNA_methylTrfase_J"/>
</dbReference>
<dbReference type="InterPro" id="IPR029063">
    <property type="entry name" value="SAM-dependent_MTases_sf"/>
</dbReference>
<dbReference type="NCBIfam" id="NF008012">
    <property type="entry name" value="PRK10742.1"/>
    <property type="match status" value="1"/>
</dbReference>
<dbReference type="PANTHER" id="PTHR36112">
    <property type="entry name" value="RIBOSOMAL RNA SMALL SUBUNIT METHYLTRANSFERASE J"/>
    <property type="match status" value="1"/>
</dbReference>
<dbReference type="PANTHER" id="PTHR36112:SF1">
    <property type="entry name" value="RIBOSOMAL RNA SMALL SUBUNIT METHYLTRANSFERASE J"/>
    <property type="match status" value="1"/>
</dbReference>
<dbReference type="Pfam" id="PF04445">
    <property type="entry name" value="SAM_MT"/>
    <property type="match status" value="1"/>
</dbReference>
<dbReference type="SUPFAM" id="SSF53335">
    <property type="entry name" value="S-adenosyl-L-methionine-dependent methyltransferases"/>
    <property type="match status" value="1"/>
</dbReference>